<accession>Q2J454</accession>
<gene>
    <name evidence="1" type="primary">rplT</name>
    <name type="ordered locus">RPB_0044</name>
</gene>
<evidence type="ECO:0000255" key="1">
    <source>
        <dbReference type="HAMAP-Rule" id="MF_00382"/>
    </source>
</evidence>
<evidence type="ECO:0000305" key="2"/>
<organism>
    <name type="scientific">Rhodopseudomonas palustris (strain HaA2)</name>
    <dbReference type="NCBI Taxonomy" id="316058"/>
    <lineage>
        <taxon>Bacteria</taxon>
        <taxon>Pseudomonadati</taxon>
        <taxon>Pseudomonadota</taxon>
        <taxon>Alphaproteobacteria</taxon>
        <taxon>Hyphomicrobiales</taxon>
        <taxon>Nitrobacteraceae</taxon>
        <taxon>Rhodopseudomonas</taxon>
    </lineage>
</organism>
<comment type="function">
    <text evidence="1">Binds directly to 23S ribosomal RNA and is necessary for the in vitro assembly process of the 50S ribosomal subunit. It is not involved in the protein synthesizing functions of that subunit.</text>
</comment>
<comment type="similarity">
    <text evidence="1">Belongs to the bacterial ribosomal protein bL20 family.</text>
</comment>
<feature type="chain" id="PRO_0000243726" description="Large ribosomal subunit protein bL20">
    <location>
        <begin position="1"/>
        <end position="119"/>
    </location>
</feature>
<dbReference type="EMBL" id="CP000250">
    <property type="protein sequence ID" value="ABD04756.1"/>
    <property type="molecule type" value="Genomic_DNA"/>
</dbReference>
<dbReference type="RefSeq" id="WP_011438946.1">
    <property type="nucleotide sequence ID" value="NC_007778.1"/>
</dbReference>
<dbReference type="SMR" id="Q2J454"/>
<dbReference type="STRING" id="316058.RPB_0044"/>
<dbReference type="KEGG" id="rpb:RPB_0044"/>
<dbReference type="eggNOG" id="COG0292">
    <property type="taxonomic scope" value="Bacteria"/>
</dbReference>
<dbReference type="HOGENOM" id="CLU_123265_0_1_5"/>
<dbReference type="OrthoDB" id="9808966at2"/>
<dbReference type="Proteomes" id="UP000008809">
    <property type="component" value="Chromosome"/>
</dbReference>
<dbReference type="GO" id="GO:1990904">
    <property type="term" value="C:ribonucleoprotein complex"/>
    <property type="evidence" value="ECO:0007669"/>
    <property type="project" value="UniProtKB-KW"/>
</dbReference>
<dbReference type="GO" id="GO:0005840">
    <property type="term" value="C:ribosome"/>
    <property type="evidence" value="ECO:0007669"/>
    <property type="project" value="UniProtKB-KW"/>
</dbReference>
<dbReference type="GO" id="GO:0019843">
    <property type="term" value="F:rRNA binding"/>
    <property type="evidence" value="ECO:0007669"/>
    <property type="project" value="UniProtKB-UniRule"/>
</dbReference>
<dbReference type="GO" id="GO:0003735">
    <property type="term" value="F:structural constituent of ribosome"/>
    <property type="evidence" value="ECO:0007669"/>
    <property type="project" value="InterPro"/>
</dbReference>
<dbReference type="GO" id="GO:0000027">
    <property type="term" value="P:ribosomal large subunit assembly"/>
    <property type="evidence" value="ECO:0007669"/>
    <property type="project" value="UniProtKB-UniRule"/>
</dbReference>
<dbReference type="GO" id="GO:0006412">
    <property type="term" value="P:translation"/>
    <property type="evidence" value="ECO:0007669"/>
    <property type="project" value="InterPro"/>
</dbReference>
<dbReference type="CDD" id="cd07026">
    <property type="entry name" value="Ribosomal_L20"/>
    <property type="match status" value="1"/>
</dbReference>
<dbReference type="FunFam" id="1.10.1900.20:FF:000001">
    <property type="entry name" value="50S ribosomal protein L20"/>
    <property type="match status" value="1"/>
</dbReference>
<dbReference type="Gene3D" id="6.10.160.10">
    <property type="match status" value="1"/>
</dbReference>
<dbReference type="Gene3D" id="1.10.1900.20">
    <property type="entry name" value="Ribosomal protein L20"/>
    <property type="match status" value="1"/>
</dbReference>
<dbReference type="HAMAP" id="MF_00382">
    <property type="entry name" value="Ribosomal_bL20"/>
    <property type="match status" value="1"/>
</dbReference>
<dbReference type="InterPro" id="IPR005813">
    <property type="entry name" value="Ribosomal_bL20"/>
</dbReference>
<dbReference type="InterPro" id="IPR049946">
    <property type="entry name" value="RIBOSOMAL_L20_CS"/>
</dbReference>
<dbReference type="InterPro" id="IPR035566">
    <property type="entry name" value="Ribosomal_protein_bL20_C"/>
</dbReference>
<dbReference type="NCBIfam" id="TIGR01032">
    <property type="entry name" value="rplT_bact"/>
    <property type="match status" value="1"/>
</dbReference>
<dbReference type="PANTHER" id="PTHR10986">
    <property type="entry name" value="39S RIBOSOMAL PROTEIN L20"/>
    <property type="match status" value="1"/>
</dbReference>
<dbReference type="Pfam" id="PF00453">
    <property type="entry name" value="Ribosomal_L20"/>
    <property type="match status" value="1"/>
</dbReference>
<dbReference type="PRINTS" id="PR00062">
    <property type="entry name" value="RIBOSOMALL20"/>
</dbReference>
<dbReference type="SUPFAM" id="SSF74731">
    <property type="entry name" value="Ribosomal protein L20"/>
    <property type="match status" value="1"/>
</dbReference>
<dbReference type="PROSITE" id="PS00937">
    <property type="entry name" value="RIBOSOMAL_L20"/>
    <property type="match status" value="1"/>
</dbReference>
<keyword id="KW-1185">Reference proteome</keyword>
<keyword id="KW-0687">Ribonucleoprotein</keyword>
<keyword id="KW-0689">Ribosomal protein</keyword>
<keyword id="KW-0694">RNA-binding</keyword>
<keyword id="KW-0699">rRNA-binding</keyword>
<name>RL20_RHOP2</name>
<reference key="1">
    <citation type="submission" date="2006-01" db="EMBL/GenBank/DDBJ databases">
        <title>Complete sequence of Rhodopseudomonas palustris HaA2.</title>
        <authorList>
            <consortium name="US DOE Joint Genome Institute"/>
            <person name="Copeland A."/>
            <person name="Lucas S."/>
            <person name="Lapidus A."/>
            <person name="Barry K."/>
            <person name="Detter J.C."/>
            <person name="Glavina T."/>
            <person name="Hammon N."/>
            <person name="Israni S."/>
            <person name="Pitluck S."/>
            <person name="Chain P."/>
            <person name="Malfatti S."/>
            <person name="Shin M."/>
            <person name="Vergez L."/>
            <person name="Schmutz J."/>
            <person name="Larimer F."/>
            <person name="Land M."/>
            <person name="Hauser L."/>
            <person name="Pelletier D.A."/>
            <person name="Kyrpides N."/>
            <person name="Anderson I."/>
            <person name="Oda Y."/>
            <person name="Harwood C.S."/>
            <person name="Richardson P."/>
        </authorList>
    </citation>
    <scope>NUCLEOTIDE SEQUENCE [LARGE SCALE GENOMIC DNA]</scope>
    <source>
        <strain>HaA2</strain>
    </source>
</reference>
<protein>
    <recommendedName>
        <fullName evidence="1">Large ribosomal subunit protein bL20</fullName>
    </recommendedName>
    <alternativeName>
        <fullName evidence="2">50S ribosomal protein L20</fullName>
    </alternativeName>
</protein>
<sequence>MARVKRGVTAHAKHKKVYKAAKGFRGRRKNTIRAAKAAVDKAGQYAFRDRKRKKRTFRALWIQRINAAVRPFGMTYSVFINGLSKSGIVVDRKVLSDLAITEPAAFQAIAEKAKAALAA</sequence>
<proteinExistence type="inferred from homology"/>